<feature type="chain" id="PRO_1000145797" description="Pyrimidine-specific ribonucleoside hydrolase RihA">
    <location>
        <begin position="1"/>
        <end position="311"/>
    </location>
</feature>
<feature type="active site" evidence="1">
    <location>
        <position position="240"/>
    </location>
</feature>
<keyword id="KW-0326">Glycosidase</keyword>
<keyword id="KW-0378">Hydrolase</keyword>
<proteinExistence type="inferred from homology"/>
<accession>B5XWV7</accession>
<reference key="1">
    <citation type="journal article" date="2008" name="PLoS Genet.">
        <title>Complete genome sequence of the N2-fixing broad host range endophyte Klebsiella pneumoniae 342 and virulence predictions verified in mice.</title>
        <authorList>
            <person name="Fouts D.E."/>
            <person name="Tyler H.L."/>
            <person name="DeBoy R.T."/>
            <person name="Daugherty S."/>
            <person name="Ren Q."/>
            <person name="Badger J.H."/>
            <person name="Durkin A.S."/>
            <person name="Huot H."/>
            <person name="Shrivastava S."/>
            <person name="Kothari S."/>
            <person name="Dodson R.J."/>
            <person name="Mohamoud Y."/>
            <person name="Khouri H."/>
            <person name="Roesch L.F.W."/>
            <person name="Krogfelt K.A."/>
            <person name="Struve C."/>
            <person name="Triplett E.W."/>
            <person name="Methe B.A."/>
        </authorList>
    </citation>
    <scope>NUCLEOTIDE SEQUENCE [LARGE SCALE GENOMIC DNA]</scope>
    <source>
        <strain>342</strain>
    </source>
</reference>
<comment type="function">
    <text evidence="1">Hydrolyzes cytidine or uridine to ribose and cytosine or uracil, respectively.</text>
</comment>
<comment type="similarity">
    <text evidence="1">Belongs to the IUNH family. RihA subfamily.</text>
</comment>
<sequence>MALPMMIDCDPGHDDAIAMVLALASPELEVKAVTASAGNQTPEKTLRNVLRMLTLLNRPDIPVAGGAWKPLMRDLIIADNVHGESGLDGPSLPEPTFAPQNCTAVELMARVLRESQEPVTLVATGPQTNVALLLASHPELHAKIARIVIMGGAMGLGNWQPAAEFNIFVDPQAAEMVFQSGIPVVMAGLDVTHKAQILPADIERFRQIGNPVSTIVAELLDFFMAYHKDEKWGFDGAPLHDPCTIAWLLKPEIFTTIERWVGVETEGKYTQGMTVVDYYHLTGNRPNTTLMLDVDREAFVDLLAQRLAFYA</sequence>
<evidence type="ECO:0000255" key="1">
    <source>
        <dbReference type="HAMAP-Rule" id="MF_01431"/>
    </source>
</evidence>
<gene>
    <name evidence="1" type="primary">rihA</name>
    <name type="ordered locus">KPK_2440</name>
</gene>
<protein>
    <recommendedName>
        <fullName evidence="1">Pyrimidine-specific ribonucleoside hydrolase RihA</fullName>
        <ecNumber evidence="1">3.2.-.-</ecNumber>
    </recommendedName>
    <alternativeName>
        <fullName evidence="1">Cytidine/uridine-specific hydrolase</fullName>
    </alternativeName>
</protein>
<dbReference type="EC" id="3.2.-.-" evidence="1"/>
<dbReference type="EMBL" id="CP000964">
    <property type="protein sequence ID" value="ACI10188.1"/>
    <property type="molecule type" value="Genomic_DNA"/>
</dbReference>
<dbReference type="SMR" id="B5XWV7"/>
<dbReference type="KEGG" id="kpe:KPK_2440"/>
<dbReference type="HOGENOM" id="CLU_036838_2_0_6"/>
<dbReference type="Proteomes" id="UP000001734">
    <property type="component" value="Chromosome"/>
</dbReference>
<dbReference type="GO" id="GO:0005829">
    <property type="term" value="C:cytosol"/>
    <property type="evidence" value="ECO:0007669"/>
    <property type="project" value="TreeGrafter"/>
</dbReference>
<dbReference type="GO" id="GO:0008477">
    <property type="term" value="F:purine nucleosidase activity"/>
    <property type="evidence" value="ECO:0007669"/>
    <property type="project" value="TreeGrafter"/>
</dbReference>
<dbReference type="GO" id="GO:0045437">
    <property type="term" value="F:uridine nucleosidase activity"/>
    <property type="evidence" value="ECO:0007669"/>
    <property type="project" value="InterPro"/>
</dbReference>
<dbReference type="GO" id="GO:0015949">
    <property type="term" value="P:nucleobase-containing small molecule interconversion"/>
    <property type="evidence" value="ECO:0007669"/>
    <property type="project" value="InterPro"/>
</dbReference>
<dbReference type="GO" id="GO:0006152">
    <property type="term" value="P:purine nucleoside catabolic process"/>
    <property type="evidence" value="ECO:0007669"/>
    <property type="project" value="TreeGrafter"/>
</dbReference>
<dbReference type="GO" id="GO:0006206">
    <property type="term" value="P:pyrimidine nucleobase metabolic process"/>
    <property type="evidence" value="ECO:0007669"/>
    <property type="project" value="UniProtKB-UniRule"/>
</dbReference>
<dbReference type="CDD" id="cd02651">
    <property type="entry name" value="nuc_hydro_IU_UC_XIUA"/>
    <property type="match status" value="1"/>
</dbReference>
<dbReference type="FunFam" id="3.90.245.10:FF:000001">
    <property type="entry name" value="Pyrimidine-specific ribonucleoside hydrolase RihA"/>
    <property type="match status" value="1"/>
</dbReference>
<dbReference type="Gene3D" id="3.90.245.10">
    <property type="entry name" value="Ribonucleoside hydrolase-like"/>
    <property type="match status" value="1"/>
</dbReference>
<dbReference type="HAMAP" id="MF_01431">
    <property type="entry name" value="Pyrim_hydro_RihA"/>
    <property type="match status" value="1"/>
</dbReference>
<dbReference type="InterPro" id="IPR015910">
    <property type="entry name" value="I/U_nuclsd_hydro_CS"/>
</dbReference>
<dbReference type="InterPro" id="IPR001910">
    <property type="entry name" value="Inosine/uridine_hydrolase_dom"/>
</dbReference>
<dbReference type="InterPro" id="IPR023186">
    <property type="entry name" value="IUNH"/>
</dbReference>
<dbReference type="InterPro" id="IPR022975">
    <property type="entry name" value="Pyrim_hydro_RihA"/>
</dbReference>
<dbReference type="InterPro" id="IPR036452">
    <property type="entry name" value="Ribo_hydro-like"/>
</dbReference>
<dbReference type="NCBIfam" id="NF007761">
    <property type="entry name" value="PRK10443.1"/>
    <property type="match status" value="1"/>
</dbReference>
<dbReference type="PANTHER" id="PTHR12304">
    <property type="entry name" value="INOSINE-URIDINE PREFERRING NUCLEOSIDE HYDROLASE"/>
    <property type="match status" value="1"/>
</dbReference>
<dbReference type="PANTHER" id="PTHR12304:SF4">
    <property type="entry name" value="URIDINE NUCLEOSIDASE"/>
    <property type="match status" value="1"/>
</dbReference>
<dbReference type="Pfam" id="PF01156">
    <property type="entry name" value="IU_nuc_hydro"/>
    <property type="match status" value="1"/>
</dbReference>
<dbReference type="SUPFAM" id="SSF53590">
    <property type="entry name" value="Nucleoside hydrolase"/>
    <property type="match status" value="1"/>
</dbReference>
<dbReference type="PROSITE" id="PS01247">
    <property type="entry name" value="IUNH"/>
    <property type="match status" value="1"/>
</dbReference>
<organism>
    <name type="scientific">Klebsiella pneumoniae (strain 342)</name>
    <dbReference type="NCBI Taxonomy" id="507522"/>
    <lineage>
        <taxon>Bacteria</taxon>
        <taxon>Pseudomonadati</taxon>
        <taxon>Pseudomonadota</taxon>
        <taxon>Gammaproteobacteria</taxon>
        <taxon>Enterobacterales</taxon>
        <taxon>Enterobacteriaceae</taxon>
        <taxon>Klebsiella/Raoultella group</taxon>
        <taxon>Klebsiella</taxon>
        <taxon>Klebsiella pneumoniae complex</taxon>
    </lineage>
</organism>
<name>RIHA_KLEP3</name>